<keyword id="KW-0004">4Fe-4S</keyword>
<keyword id="KW-0997">Cell inner membrane</keyword>
<keyword id="KW-1003">Cell membrane</keyword>
<keyword id="KW-0249">Electron transport</keyword>
<keyword id="KW-0408">Iron</keyword>
<keyword id="KW-0411">Iron-sulfur</keyword>
<keyword id="KW-0472">Membrane</keyword>
<keyword id="KW-0479">Metal-binding</keyword>
<keyword id="KW-1185">Reference proteome</keyword>
<keyword id="KW-0677">Repeat</keyword>
<keyword id="KW-1278">Translocase</keyword>
<keyword id="KW-0813">Transport</keyword>
<comment type="function">
    <text evidence="1">Part of a membrane-bound complex that couples electron transfer with translocation of ions across the membrane.</text>
</comment>
<comment type="cofactor">
    <cofactor evidence="1">
        <name>[4Fe-4S] cluster</name>
        <dbReference type="ChEBI" id="CHEBI:49883"/>
    </cofactor>
    <text evidence="1">Binds 2 [4Fe-4S] clusters per subunit.</text>
</comment>
<comment type="subunit">
    <text evidence="1">The complex is composed of six subunits: RnfA, RnfB, RnfC, RnfD, RnfE and RnfG.</text>
</comment>
<comment type="subcellular location">
    <subcellularLocation>
        <location evidence="1">Cell inner membrane</location>
        <topology evidence="1">Peripheral membrane protein</topology>
    </subcellularLocation>
</comment>
<comment type="similarity">
    <text evidence="1">Belongs to the 4Fe4S bacterial-type ferredoxin family. RnfC subfamily.</text>
</comment>
<dbReference type="EC" id="7.-.-.-" evidence="1"/>
<dbReference type="EMBL" id="CU468135">
    <property type="protein sequence ID" value="CAO96822.1"/>
    <property type="molecule type" value="Genomic_DNA"/>
</dbReference>
<dbReference type="RefSeq" id="WP_012441511.1">
    <property type="nucleotide sequence ID" value="NC_010694.1"/>
</dbReference>
<dbReference type="SMR" id="B2VEQ3"/>
<dbReference type="STRING" id="465817.ETA_17760"/>
<dbReference type="KEGG" id="eta:ETA_17760"/>
<dbReference type="eggNOG" id="COG4656">
    <property type="taxonomic scope" value="Bacteria"/>
</dbReference>
<dbReference type="HOGENOM" id="CLU_010808_2_1_6"/>
<dbReference type="OrthoDB" id="9767754at2"/>
<dbReference type="Proteomes" id="UP000001726">
    <property type="component" value="Chromosome"/>
</dbReference>
<dbReference type="GO" id="GO:0005886">
    <property type="term" value="C:plasma membrane"/>
    <property type="evidence" value="ECO:0007669"/>
    <property type="project" value="UniProtKB-SubCell"/>
</dbReference>
<dbReference type="GO" id="GO:0051539">
    <property type="term" value="F:4 iron, 4 sulfur cluster binding"/>
    <property type="evidence" value="ECO:0007669"/>
    <property type="project" value="UniProtKB-KW"/>
</dbReference>
<dbReference type="GO" id="GO:0009055">
    <property type="term" value="F:electron transfer activity"/>
    <property type="evidence" value="ECO:0007669"/>
    <property type="project" value="InterPro"/>
</dbReference>
<dbReference type="GO" id="GO:0046872">
    <property type="term" value="F:metal ion binding"/>
    <property type="evidence" value="ECO:0007669"/>
    <property type="project" value="UniProtKB-KW"/>
</dbReference>
<dbReference type="GO" id="GO:0022900">
    <property type="term" value="P:electron transport chain"/>
    <property type="evidence" value="ECO:0007669"/>
    <property type="project" value="UniProtKB-UniRule"/>
</dbReference>
<dbReference type="Gene3D" id="3.30.70.20">
    <property type="match status" value="1"/>
</dbReference>
<dbReference type="Gene3D" id="3.40.50.11540">
    <property type="entry name" value="NADH-ubiquinone oxidoreductase 51kDa subunit"/>
    <property type="match status" value="1"/>
</dbReference>
<dbReference type="HAMAP" id="MF_00461">
    <property type="entry name" value="RsxC_RnfC"/>
    <property type="match status" value="1"/>
</dbReference>
<dbReference type="InterPro" id="IPR017896">
    <property type="entry name" value="4Fe4S_Fe-S-bd"/>
</dbReference>
<dbReference type="InterPro" id="IPR017900">
    <property type="entry name" value="4Fe4S_Fe_S_CS"/>
</dbReference>
<dbReference type="InterPro" id="IPR010208">
    <property type="entry name" value="Ion_transpt_RnfC/RsxC"/>
</dbReference>
<dbReference type="InterPro" id="IPR011538">
    <property type="entry name" value="Nuo51_FMN-bd"/>
</dbReference>
<dbReference type="InterPro" id="IPR037225">
    <property type="entry name" value="Nuo51_FMN-bd_sf"/>
</dbReference>
<dbReference type="InterPro" id="IPR026902">
    <property type="entry name" value="RnfC_N"/>
</dbReference>
<dbReference type="InterPro" id="IPR019554">
    <property type="entry name" value="Soluble_ligand-bd"/>
</dbReference>
<dbReference type="NCBIfam" id="NF003454">
    <property type="entry name" value="PRK05035.1"/>
    <property type="match status" value="1"/>
</dbReference>
<dbReference type="NCBIfam" id="TIGR01945">
    <property type="entry name" value="rnfC"/>
    <property type="match status" value="1"/>
</dbReference>
<dbReference type="PANTHER" id="PTHR43034">
    <property type="entry name" value="ION-TRANSLOCATING OXIDOREDUCTASE COMPLEX SUBUNIT C"/>
    <property type="match status" value="1"/>
</dbReference>
<dbReference type="PANTHER" id="PTHR43034:SF2">
    <property type="entry name" value="ION-TRANSLOCATING OXIDOREDUCTASE COMPLEX SUBUNIT C"/>
    <property type="match status" value="1"/>
</dbReference>
<dbReference type="Pfam" id="PF01512">
    <property type="entry name" value="Complex1_51K"/>
    <property type="match status" value="1"/>
</dbReference>
<dbReference type="Pfam" id="PF12838">
    <property type="entry name" value="Fer4_7"/>
    <property type="match status" value="1"/>
</dbReference>
<dbReference type="Pfam" id="PF13375">
    <property type="entry name" value="RnfC_N"/>
    <property type="match status" value="1"/>
</dbReference>
<dbReference type="Pfam" id="PF10531">
    <property type="entry name" value="SLBB"/>
    <property type="match status" value="1"/>
</dbReference>
<dbReference type="SUPFAM" id="SSF46548">
    <property type="entry name" value="alpha-helical ferredoxin"/>
    <property type="match status" value="1"/>
</dbReference>
<dbReference type="SUPFAM" id="SSF142019">
    <property type="entry name" value="Nqo1 FMN-binding domain-like"/>
    <property type="match status" value="1"/>
</dbReference>
<dbReference type="PROSITE" id="PS00198">
    <property type="entry name" value="4FE4S_FER_1"/>
    <property type="match status" value="2"/>
</dbReference>
<dbReference type="PROSITE" id="PS51379">
    <property type="entry name" value="4FE4S_FER_2"/>
    <property type="match status" value="2"/>
</dbReference>
<feature type="chain" id="PRO_1000194506" description="Ion-translocating oxidoreductase complex subunit C">
    <location>
        <begin position="1"/>
        <end position="804"/>
    </location>
</feature>
<feature type="domain" description="4Fe-4S ferredoxin-type 1" evidence="1">
    <location>
        <begin position="366"/>
        <end position="397"/>
    </location>
</feature>
<feature type="domain" description="4Fe-4S ferredoxin-type 2" evidence="1">
    <location>
        <begin position="407"/>
        <end position="436"/>
    </location>
</feature>
<feature type="region of interest" description="Disordered" evidence="2">
    <location>
        <begin position="466"/>
        <end position="532"/>
    </location>
</feature>
<feature type="region of interest" description="Disordered" evidence="2">
    <location>
        <begin position="567"/>
        <end position="804"/>
    </location>
</feature>
<feature type="compositionally biased region" description="Low complexity" evidence="2">
    <location>
        <begin position="484"/>
        <end position="495"/>
    </location>
</feature>
<feature type="compositionally biased region" description="Low complexity" evidence="2">
    <location>
        <begin position="567"/>
        <end position="582"/>
    </location>
</feature>
<feature type="compositionally biased region" description="Low complexity" evidence="2">
    <location>
        <begin position="592"/>
        <end position="619"/>
    </location>
</feature>
<feature type="compositionally biased region" description="Low complexity" evidence="2">
    <location>
        <begin position="629"/>
        <end position="660"/>
    </location>
</feature>
<feature type="compositionally biased region" description="Low complexity" evidence="2">
    <location>
        <begin position="668"/>
        <end position="693"/>
    </location>
</feature>
<feature type="compositionally biased region" description="Low complexity" evidence="2">
    <location>
        <begin position="706"/>
        <end position="731"/>
    </location>
</feature>
<feature type="compositionally biased region" description="Low complexity" evidence="2">
    <location>
        <begin position="744"/>
        <end position="769"/>
    </location>
</feature>
<feature type="binding site" evidence="1">
    <location>
        <position position="377"/>
    </location>
    <ligand>
        <name>[4Fe-4S] cluster</name>
        <dbReference type="ChEBI" id="CHEBI:49883"/>
        <label>1</label>
    </ligand>
</feature>
<feature type="binding site" evidence="1">
    <location>
        <position position="380"/>
    </location>
    <ligand>
        <name>[4Fe-4S] cluster</name>
        <dbReference type="ChEBI" id="CHEBI:49883"/>
        <label>1</label>
    </ligand>
</feature>
<feature type="binding site" evidence="1">
    <location>
        <position position="383"/>
    </location>
    <ligand>
        <name>[4Fe-4S] cluster</name>
        <dbReference type="ChEBI" id="CHEBI:49883"/>
        <label>1</label>
    </ligand>
</feature>
<feature type="binding site" evidence="1">
    <location>
        <position position="387"/>
    </location>
    <ligand>
        <name>[4Fe-4S] cluster</name>
        <dbReference type="ChEBI" id="CHEBI:49883"/>
        <label>2</label>
    </ligand>
</feature>
<feature type="binding site" evidence="1">
    <location>
        <position position="416"/>
    </location>
    <ligand>
        <name>[4Fe-4S] cluster</name>
        <dbReference type="ChEBI" id="CHEBI:49883"/>
        <label>2</label>
    </ligand>
</feature>
<feature type="binding site" evidence="1">
    <location>
        <position position="419"/>
    </location>
    <ligand>
        <name>[4Fe-4S] cluster</name>
        <dbReference type="ChEBI" id="CHEBI:49883"/>
        <label>2</label>
    </ligand>
</feature>
<feature type="binding site" evidence="1">
    <location>
        <position position="422"/>
    </location>
    <ligand>
        <name>[4Fe-4S] cluster</name>
        <dbReference type="ChEBI" id="CHEBI:49883"/>
        <label>2</label>
    </ligand>
</feature>
<feature type="binding site" evidence="1">
    <location>
        <position position="426"/>
    </location>
    <ligand>
        <name>[4Fe-4S] cluster</name>
        <dbReference type="ChEBI" id="CHEBI:49883"/>
        <label>1</label>
    </ligand>
</feature>
<organism>
    <name type="scientific">Erwinia tasmaniensis (strain DSM 17950 / CFBP 7177 / CIP 109463 / NCPPB 4357 / Et1/99)</name>
    <dbReference type="NCBI Taxonomy" id="465817"/>
    <lineage>
        <taxon>Bacteria</taxon>
        <taxon>Pseudomonadati</taxon>
        <taxon>Pseudomonadota</taxon>
        <taxon>Gammaproteobacteria</taxon>
        <taxon>Enterobacterales</taxon>
        <taxon>Erwiniaceae</taxon>
        <taxon>Erwinia</taxon>
    </lineage>
</organism>
<gene>
    <name evidence="1" type="primary">rnfC</name>
    <name type="ordered locus">ETA_17760</name>
</gene>
<protein>
    <recommendedName>
        <fullName evidence="1">Ion-translocating oxidoreductase complex subunit C</fullName>
        <ecNumber evidence="1">7.-.-.-</ecNumber>
    </recommendedName>
    <alternativeName>
        <fullName evidence="1">Rnf electron transport complex subunit C</fullName>
    </alternativeName>
</protein>
<evidence type="ECO:0000255" key="1">
    <source>
        <dbReference type="HAMAP-Rule" id="MF_00461"/>
    </source>
</evidence>
<evidence type="ECO:0000256" key="2">
    <source>
        <dbReference type="SAM" id="MobiDB-lite"/>
    </source>
</evidence>
<name>RNFC_ERWT9</name>
<proteinExistence type="inferred from homology"/>
<reference key="1">
    <citation type="journal article" date="2008" name="Environ. Microbiol.">
        <title>The genome of Erwinia tasmaniensis strain Et1/99, a non-pathogenic bacterium in the genus Erwinia.</title>
        <authorList>
            <person name="Kube M."/>
            <person name="Migdoll A.M."/>
            <person name="Mueller I."/>
            <person name="Kuhl H."/>
            <person name="Beck A."/>
            <person name="Reinhardt R."/>
            <person name="Geider K."/>
        </authorList>
    </citation>
    <scope>NUCLEOTIDE SEQUENCE [LARGE SCALE GENOMIC DNA]</scope>
    <source>
        <strain>DSM 17950 / CFBP 7177 / CIP 109463 / NCPPB 4357 / Et1/99</strain>
    </source>
</reference>
<accession>B2VEQ3</accession>
<sequence>MLNLLNLFKKDRLWDFDGGIHPPEMKTQSNGTPLRHLPLPAQFVLPLKQHIGHEGEIGVRPGDQVLRGQPLTFGTGRMLPVHAPTSGTVSKIAPHMTAHPSALAEMCLFILPDGEDRWCEKRPLEDYRSVERSELVARVHQAGVAGLGGAGFPTASKLKGGLHGVNTLIINAAECEPYITADDRLMQDHAAEVLEGSRILAWILQAERVLIGIEDNKPEAIAALKKALGSATDLHIRVIPTKYPSGGAKQLTKILTGKEVPHGGRSTDIGVLMQNVGTAFAVKRAIIDGEPLTERVVTLTGESVAQPGNVWARLGTPISHLLQHAGFIPGAEQMVVMGGPLMGFTLPTLDVPVVKITNCILAPAASEMGQNEAEQGCIRCSACADACPAALLPQQLYWYSRGGDHDKARAHNIADCIECGACAYVCPSNIPLVQYYRQEKAEIQAIDLEAERAALAKNRFEARQQRLEREKAARSAKHQQAKRSVASSDAGAIAAARERVAARQAEGVSPENHADNSLQAAVQAQHEAEVRVHQADLQAANEPVTRQTLDPRKAAVEAAIARTKAKKAAQAAEASPTEAPQQSAPEDEPRKAAVAAAVARTKAKKAAQAAEASPTEAPQQSAPEDVPRKAAVAAAVARAKAKKAAQAAEASATEAPQQSAPEHDPRKAAVAAAVARAKAKKAAQAAEASATEAPLQPAPEDDPRKAAVAAAVARAKAKKAAQAAEASATEAPLQPAPEDDPRKAAVAAAVARAKAKKAAQAAEASATEAPLQPAPEDDPRKAAIAAAIARAKARKTQQPSMQED</sequence>